<dbReference type="PDB" id="6BTV">
    <property type="method" value="NMR"/>
    <property type="chains" value="A=1-33"/>
</dbReference>
<dbReference type="PDBsum" id="6BTV"/>
<dbReference type="BMRB" id="P84508"/>
<dbReference type="SMR" id="P84508"/>
<dbReference type="ArachnoServer" id="AS000248">
    <property type="toxin name" value="beta-theraphotoxin-Cm1b"/>
</dbReference>
<dbReference type="GO" id="GO:0005615">
    <property type="term" value="C:extracellular space"/>
    <property type="evidence" value="ECO:0000314"/>
    <property type="project" value="UniProtKB"/>
</dbReference>
<dbReference type="GO" id="GO:0005246">
    <property type="term" value="F:calcium channel regulator activity"/>
    <property type="evidence" value="ECO:0007669"/>
    <property type="project" value="UniProtKB-KW"/>
</dbReference>
<dbReference type="GO" id="GO:0019871">
    <property type="term" value="F:sodium channel inhibitor activity"/>
    <property type="evidence" value="ECO:0000314"/>
    <property type="project" value="UniProtKB"/>
</dbReference>
<dbReference type="GO" id="GO:0090729">
    <property type="term" value="F:toxin activity"/>
    <property type="evidence" value="ECO:0000314"/>
    <property type="project" value="UniProtKB"/>
</dbReference>
<dbReference type="GO" id="GO:0044493">
    <property type="term" value="P:envenomation resulting in negative regulation of voltage-gated sodium channel activity in another organism"/>
    <property type="evidence" value="ECO:0000314"/>
    <property type="project" value="UniProtKB"/>
</dbReference>
<dbReference type="InterPro" id="IPR011696">
    <property type="entry name" value="Huwentoxin-1"/>
</dbReference>
<dbReference type="InterPro" id="IPR013140">
    <property type="entry name" value="Huwentoxin_CS1"/>
</dbReference>
<dbReference type="Pfam" id="PF07740">
    <property type="entry name" value="Toxin_12"/>
    <property type="match status" value="1"/>
</dbReference>
<dbReference type="SUPFAM" id="SSF57059">
    <property type="entry name" value="omega toxin-like"/>
    <property type="match status" value="1"/>
</dbReference>
<dbReference type="PROSITE" id="PS60021">
    <property type="entry name" value="HWTX_1"/>
    <property type="match status" value="1"/>
</dbReference>
<name>TX2_CERMR</name>
<organism>
    <name type="scientific">Ceratogyrus marshalli</name>
    <name type="common">Straighthorned baboon tarantula</name>
    <name type="synonym">Ceratogyrus cornuatus</name>
    <dbReference type="NCBI Taxonomy" id="316287"/>
    <lineage>
        <taxon>Eukaryota</taxon>
        <taxon>Metazoa</taxon>
        <taxon>Ecdysozoa</taxon>
        <taxon>Arthropoda</taxon>
        <taxon>Chelicerata</taxon>
        <taxon>Arachnida</taxon>
        <taxon>Araneae</taxon>
        <taxon>Mygalomorphae</taxon>
        <taxon>Theraphosidae</taxon>
        <taxon>Ceratogyrus</taxon>
    </lineage>
</organism>
<reference key="1">
    <citation type="journal article" date="2006" name="Mol. Pharmacol.">
        <title>Four novel tarantula toxins as selective modulators of voltage-gated sodium channel subtypes.</title>
        <authorList>
            <person name="Bosmans F."/>
            <person name="Rash L."/>
            <person name="Zhu S."/>
            <person name="Diochot S."/>
            <person name="Lazdunski M."/>
            <person name="Escoubas P."/>
            <person name="Tytgat J."/>
        </authorList>
    </citation>
    <scope>PROTEIN SEQUENCE</scope>
    <scope>FUNCTION</scope>
    <scope>BIOASSAY</scope>
    <scope>SUBCELLULAR LOCATION</scope>
    <scope>MASS SPECTROMETRY</scope>
    <scope>AMIDATION AT LEU-33</scope>
    <source>
        <tissue>Venom</tissue>
    </source>
</reference>
<reference key="2">
    <citation type="journal article" date="2017" name="PLoS ONE">
        <title>Discovery and mode of action of a novel analgesic beta-toxin from the African spider Ceratogyrus darlingi.</title>
        <authorList>
            <person name="Sousa S.R."/>
            <person name="Wingerd J.S."/>
            <person name="Brust A."/>
            <person name="Bladen C."/>
            <person name="Ragnarsson L."/>
            <person name="Herzig V."/>
            <person name="Deuis J.R."/>
            <person name="Dutertre S."/>
            <person name="Vetter I."/>
            <person name="Zamponi G.W."/>
            <person name="King G.F."/>
            <person name="Alewood P.F."/>
            <person name="Lewis R.J."/>
        </authorList>
    </citation>
    <scope>FUNCTION</scope>
</reference>
<reference key="3">
    <citation type="journal article" date="2018" name="J. Biol. Chem.">
        <title>Gating modifier toxins isolated from spider venom: modulation of voltage-gated sodium channels and the role of lipid membranes.</title>
        <authorList>
            <person name="Agwa A.J."/>
            <person name="Peigneur S."/>
            <person name="Chow C.Y."/>
            <person name="Lawrence N."/>
            <person name="Craik D.J."/>
            <person name="Tytgat J."/>
            <person name="King G.F."/>
            <person name="Henriques S.T."/>
            <person name="Schroeder C.I."/>
        </authorList>
    </citation>
    <scope>STRUCTURE BY NMR</scope>
    <scope>FUNCTION</scope>
    <scope>SYNTHESIS</scope>
    <scope>DISULFIDE BOND</scope>
</reference>
<feature type="peptide" id="PRO_0000045001" description="Beta-theraphotoxin-Cm1b" evidence="2">
    <location>
        <begin position="1"/>
        <end position="33"/>
    </location>
</feature>
<feature type="modified residue" description="Leucine amide" evidence="2">
    <location>
        <position position="33"/>
    </location>
</feature>
<feature type="disulfide bond" evidence="4 9">
    <location>
        <begin position="2"/>
        <end position="17"/>
    </location>
</feature>
<feature type="disulfide bond" evidence="4 9">
    <location>
        <begin position="9"/>
        <end position="22"/>
    </location>
</feature>
<feature type="disulfide bond" evidence="4 9">
    <location>
        <begin position="16"/>
        <end position="29"/>
    </location>
</feature>
<feature type="strand" evidence="10">
    <location>
        <begin position="5"/>
        <end position="8"/>
    </location>
</feature>
<feature type="helix" evidence="10">
    <location>
        <begin position="11"/>
        <end position="13"/>
    </location>
</feature>
<feature type="strand" evidence="10">
    <location>
        <begin position="20"/>
        <end position="22"/>
    </location>
</feature>
<feature type="strand" evidence="10">
    <location>
        <begin position="24"/>
        <end position="26"/>
    </location>
</feature>
<feature type="strand" evidence="10">
    <location>
        <begin position="28"/>
        <end position="31"/>
    </location>
</feature>
<keyword id="KW-0002">3D-structure</keyword>
<keyword id="KW-0027">Amidation</keyword>
<keyword id="KW-0108">Calcium channel impairing toxin</keyword>
<keyword id="KW-0903">Direct protein sequencing</keyword>
<keyword id="KW-1015">Disulfide bond</keyword>
<keyword id="KW-0872">Ion channel impairing toxin</keyword>
<keyword id="KW-0960">Knottin</keyword>
<keyword id="KW-0528">Neurotoxin</keyword>
<keyword id="KW-0964">Secreted</keyword>
<keyword id="KW-0800">Toxin</keyword>
<keyword id="KW-1218">Voltage-gated calcium channel impairing toxin</keyword>
<keyword id="KW-0738">Voltage-gated sodium channel impairing toxin</keyword>
<protein>
    <recommendedName>
        <fullName evidence="7">Beta-theraphotoxin-Cm1b</fullName>
        <shortName evidence="7">Beta-TRTX-Cm1b</shortName>
    </recommendedName>
    <alternativeName>
        <fullName evidence="6">CcoTx-II</fullName>
    </alternativeName>
    <alternativeName>
        <fullName evidence="5">Ceratotoxin-2</fullName>
        <shortName evidence="5">CcoTx2</shortName>
    </alternativeName>
</protein>
<comment type="function">
    <text evidence="2 3 4">Inhibits several voltage-gated sodium channels and only one voltage-gated calcium channel (Cav2.2/CACNA1B (IC(50)=1.1 uM) and Nav1.2/SCN2A (IC(50)=3.7-80 nM), Nav1.3/SCN3A (IC(50)=88-5570 nM), Nav1.1/SCN1A (IC(50)=170-407 nM), Nav1.7/SCN9A (IC(50)=95.5-230 nM), Nav1.6/SCN6A (IC(50)=49.9-3990 nM), Nav1.4/SCN4A (IC(50)=113-400 nM or &gt;10 uM), Nav1.5/SCN5A (IC(50)=1524-1634 nM or &gt;10 uM)) (PubMed:16267209, PubMed:28880874, PubMed:29703751). The toxin acts by shifting the voltage dependence of channel activation to more depolarized potentials and by blocking the inward component of the sodium current (PubMed:16267209). It shows moderate affinity for lipid bilayers without cholesterol and high affinity for lipid bilayers containing cholesterol (PubMed:29703751). In vivo, this toxin causes general ataxia, lack of response to stimuli, and semiparalysis (PubMed:16267209). After a few minutes, the mice are unable to stand, and breathing is reduced in rhythm and intensity (PubMed:16267209). Symptoms gradually increase with progressive slowing of breathing and flaccid paralysis; death occurred within 10 to 20 minutes post injection (PubMed:16267209). Animals remain totally flaccid, and no symptoms of excitatory neurotoxicity are observed (PubMed:16267209).</text>
</comment>
<comment type="subcellular location">
    <subcellularLocation>
        <location evidence="2">Secreted</location>
    </subcellularLocation>
</comment>
<comment type="tissue specificity">
    <text evidence="8">Expressed by the venom gland.</text>
</comment>
<comment type="domain">
    <text evidence="1">The presence of a 'disulfide through disulfide knot' structurally defines this protein as a knottin.</text>
</comment>
<comment type="mass spectrometry"/>
<comment type="miscellaneous">
    <text evidence="3">Negative results: does not inhibit Cav1.3 and Cav3.1 (PubMed:28880874). Does not or only weakly inhibits Nav1.8/SCN10A (PubMed:16267209, PubMed:28880874).</text>
</comment>
<comment type="similarity">
    <text evidence="7">Belongs to the neurotoxin 10 (Hwtx-1) family. 04 (CcoTx1) subfamily.</text>
</comment>
<evidence type="ECO:0000250" key="1">
    <source>
        <dbReference type="UniProtKB" id="P84507"/>
    </source>
</evidence>
<evidence type="ECO:0000269" key="2">
    <source>
    </source>
</evidence>
<evidence type="ECO:0000269" key="3">
    <source>
    </source>
</evidence>
<evidence type="ECO:0000269" key="4">
    <source>
    </source>
</evidence>
<evidence type="ECO:0000303" key="5">
    <source>
    </source>
</evidence>
<evidence type="ECO:0000303" key="6">
    <source>
    </source>
</evidence>
<evidence type="ECO:0000305" key="7"/>
<evidence type="ECO:0000305" key="8">
    <source>
    </source>
</evidence>
<evidence type="ECO:0000312" key="9">
    <source>
        <dbReference type="PDB" id="6BTV"/>
    </source>
</evidence>
<evidence type="ECO:0007829" key="10">
    <source>
        <dbReference type="PDB" id="6BTV"/>
    </source>
</evidence>
<sequence>DCLGWFKSCDPKNDKCCKNYTCSRRDRWCKYYL</sequence>
<accession>P84508</accession>
<proteinExistence type="evidence at protein level"/>